<accession>A5FG89</accession>
<sequence>MSNHKILTIDNLSLQEFDSEAELIPLLTPEDEEEMNNEELPVSLPILPLRNTVLFPGVVIPISAGRDKSIKLINDANAGGKIIGVVSQINEEDEDPSKDDIHKIGTVARILRVLKMPDGNVTVILQGKKRFEIDEVVSEEPYMTASIKEVSEERPDENDSEFTAILDSVKELAIQIIKESPNIPSEATFAIKNIESQSFLINFVSSNMNLSVKEKQGLLSINGLKERALETLRYMNVELQKLELKNDIQSKVRFDLDQQQREYFLHQQMKTIQEELGGVSQEEEMDEMGQKAKTKKWDEKTQKHFEKELSKMRRMNPQSPDFGIQRNYLELFLELPWGEYSKDKFDLKHAQKVLDKDHFGLDEVKKRMIEHLAVLKLRNDMKSPIICLTGPPGVGKTSIGRSVAEALGREYVRISLGGLRDEAEIRGHRKTYIGAMPGRIIQSLKKAGTSNPVFILDEIDKLSSGNSGDPSSALLEVLDPEQNNAFYDNFLEMGYDLSKVMFIATSNNMAAIQPALRDRMEVIKMSGYTIEEKVEIAKRHLFPKQLEAHGLTSKDLTIGKKQLEKIVEGYTRESGVRNLETKIAQVIRNAAKAVAMEEEYNKKVTDEDIVKVLGVPRLERDKYENNDVAGVVTGLAWTSVGGDILFIESLISEGKGALTITGNLGNVMKESATIALEYIKANAKKLGLAIELFQKYNIHLHVPEGATPKDGPSAGIAMLTSLVSLLTQKKVKKSLAMTGEITLRGKVLPVGGIKEKILAAKRAGIKEIILCHENKSDIDEIKEEYLEGLTFHYVKEMSEVLAIALTDQNVKNAKTLK</sequence>
<gene>
    <name evidence="1" type="primary">lon</name>
    <name type="ordered locus">Fjoh_2754</name>
</gene>
<feature type="chain" id="PRO_0000396565" description="Lon protease">
    <location>
        <begin position="1"/>
        <end position="817"/>
    </location>
</feature>
<feature type="domain" description="Lon N-terminal" evidence="3">
    <location>
        <begin position="44"/>
        <end position="239"/>
    </location>
</feature>
<feature type="domain" description="Lon proteolytic" evidence="2">
    <location>
        <begin position="626"/>
        <end position="807"/>
    </location>
</feature>
<feature type="active site" evidence="1">
    <location>
        <position position="713"/>
    </location>
</feature>
<feature type="active site" evidence="1">
    <location>
        <position position="756"/>
    </location>
</feature>
<feature type="binding site" evidence="1">
    <location>
        <begin position="390"/>
        <end position="397"/>
    </location>
    <ligand>
        <name>ATP</name>
        <dbReference type="ChEBI" id="CHEBI:30616"/>
    </ligand>
</feature>
<keyword id="KW-0067">ATP-binding</keyword>
<keyword id="KW-0963">Cytoplasm</keyword>
<keyword id="KW-0378">Hydrolase</keyword>
<keyword id="KW-0547">Nucleotide-binding</keyword>
<keyword id="KW-0645">Protease</keyword>
<keyword id="KW-0720">Serine protease</keyword>
<keyword id="KW-0346">Stress response</keyword>
<reference key="1">
    <citation type="journal article" date="2009" name="Appl. Environ. Microbiol.">
        <title>Novel features of the polysaccharide-digesting gliding bacterium Flavobacterium johnsoniae as revealed by genome sequence analysis.</title>
        <authorList>
            <person name="McBride M.J."/>
            <person name="Xie G."/>
            <person name="Martens E.C."/>
            <person name="Lapidus A."/>
            <person name="Henrissat B."/>
            <person name="Rhodes R.G."/>
            <person name="Goltsman E."/>
            <person name="Wang W."/>
            <person name="Xu J."/>
            <person name="Hunnicutt D.W."/>
            <person name="Staroscik A.M."/>
            <person name="Hoover T.R."/>
            <person name="Cheng Y.Q."/>
            <person name="Stein J.L."/>
        </authorList>
    </citation>
    <scope>NUCLEOTIDE SEQUENCE [LARGE SCALE GENOMIC DNA]</scope>
    <source>
        <strain>ATCC 17061 / DSM 2064 / JCM 8514 / BCRC 14874 / CCUG 350202 / NBRC 14942 / NCIMB 11054 / UW101</strain>
    </source>
</reference>
<protein>
    <recommendedName>
        <fullName evidence="1">Lon protease</fullName>
        <ecNumber evidence="1">3.4.21.53</ecNumber>
    </recommendedName>
    <alternativeName>
        <fullName evidence="1">ATP-dependent protease La</fullName>
    </alternativeName>
</protein>
<dbReference type="EC" id="3.4.21.53" evidence="1"/>
<dbReference type="EMBL" id="CP000685">
    <property type="protein sequence ID" value="ABQ05776.1"/>
    <property type="molecule type" value="Genomic_DNA"/>
</dbReference>
<dbReference type="RefSeq" id="WP_012024815.1">
    <property type="nucleotide sequence ID" value="NC_009441.1"/>
</dbReference>
<dbReference type="SMR" id="A5FG89"/>
<dbReference type="STRING" id="376686.Fjoh_2754"/>
<dbReference type="KEGG" id="fjo:Fjoh_2754"/>
<dbReference type="eggNOG" id="COG0466">
    <property type="taxonomic scope" value="Bacteria"/>
</dbReference>
<dbReference type="HOGENOM" id="CLU_004109_4_3_10"/>
<dbReference type="OrthoDB" id="9803599at2"/>
<dbReference type="Proteomes" id="UP000006694">
    <property type="component" value="Chromosome"/>
</dbReference>
<dbReference type="GO" id="GO:0005737">
    <property type="term" value="C:cytoplasm"/>
    <property type="evidence" value="ECO:0007669"/>
    <property type="project" value="UniProtKB-SubCell"/>
</dbReference>
<dbReference type="GO" id="GO:0005524">
    <property type="term" value="F:ATP binding"/>
    <property type="evidence" value="ECO:0007669"/>
    <property type="project" value="UniProtKB-UniRule"/>
</dbReference>
<dbReference type="GO" id="GO:0016887">
    <property type="term" value="F:ATP hydrolysis activity"/>
    <property type="evidence" value="ECO:0007669"/>
    <property type="project" value="UniProtKB-UniRule"/>
</dbReference>
<dbReference type="GO" id="GO:0004176">
    <property type="term" value="F:ATP-dependent peptidase activity"/>
    <property type="evidence" value="ECO:0007669"/>
    <property type="project" value="UniProtKB-UniRule"/>
</dbReference>
<dbReference type="GO" id="GO:0043565">
    <property type="term" value="F:sequence-specific DNA binding"/>
    <property type="evidence" value="ECO:0007669"/>
    <property type="project" value="UniProtKB-UniRule"/>
</dbReference>
<dbReference type="GO" id="GO:0004252">
    <property type="term" value="F:serine-type endopeptidase activity"/>
    <property type="evidence" value="ECO:0007669"/>
    <property type="project" value="UniProtKB-UniRule"/>
</dbReference>
<dbReference type="GO" id="GO:0034605">
    <property type="term" value="P:cellular response to heat"/>
    <property type="evidence" value="ECO:0007669"/>
    <property type="project" value="UniProtKB-UniRule"/>
</dbReference>
<dbReference type="GO" id="GO:0006515">
    <property type="term" value="P:protein quality control for misfolded or incompletely synthesized proteins"/>
    <property type="evidence" value="ECO:0007669"/>
    <property type="project" value="UniProtKB-UniRule"/>
</dbReference>
<dbReference type="CDD" id="cd19500">
    <property type="entry name" value="RecA-like_Lon"/>
    <property type="match status" value="1"/>
</dbReference>
<dbReference type="FunFam" id="3.40.50.300:FF:000021">
    <property type="entry name" value="Lon protease homolog"/>
    <property type="match status" value="1"/>
</dbReference>
<dbReference type="Gene3D" id="1.10.8.60">
    <property type="match status" value="1"/>
</dbReference>
<dbReference type="Gene3D" id="1.20.5.5270">
    <property type="match status" value="1"/>
</dbReference>
<dbReference type="Gene3D" id="1.20.58.1480">
    <property type="match status" value="1"/>
</dbReference>
<dbReference type="Gene3D" id="3.30.230.10">
    <property type="match status" value="1"/>
</dbReference>
<dbReference type="Gene3D" id="2.30.130.40">
    <property type="entry name" value="LON domain-like"/>
    <property type="match status" value="1"/>
</dbReference>
<dbReference type="Gene3D" id="3.40.50.300">
    <property type="entry name" value="P-loop containing nucleotide triphosphate hydrolases"/>
    <property type="match status" value="1"/>
</dbReference>
<dbReference type="HAMAP" id="MF_01973">
    <property type="entry name" value="lon_bact"/>
    <property type="match status" value="1"/>
</dbReference>
<dbReference type="InterPro" id="IPR003593">
    <property type="entry name" value="AAA+_ATPase"/>
</dbReference>
<dbReference type="InterPro" id="IPR003959">
    <property type="entry name" value="ATPase_AAA_core"/>
</dbReference>
<dbReference type="InterPro" id="IPR027543">
    <property type="entry name" value="Lon_bac"/>
</dbReference>
<dbReference type="InterPro" id="IPR004815">
    <property type="entry name" value="Lon_bac/euk-typ"/>
</dbReference>
<dbReference type="InterPro" id="IPR054594">
    <property type="entry name" value="Lon_lid"/>
</dbReference>
<dbReference type="InterPro" id="IPR008269">
    <property type="entry name" value="Lon_proteolytic"/>
</dbReference>
<dbReference type="InterPro" id="IPR027065">
    <property type="entry name" value="Lon_Prtase"/>
</dbReference>
<dbReference type="InterPro" id="IPR003111">
    <property type="entry name" value="Lon_prtase_N"/>
</dbReference>
<dbReference type="InterPro" id="IPR046336">
    <property type="entry name" value="Lon_prtase_N_sf"/>
</dbReference>
<dbReference type="InterPro" id="IPR027417">
    <property type="entry name" value="P-loop_NTPase"/>
</dbReference>
<dbReference type="InterPro" id="IPR008268">
    <property type="entry name" value="Peptidase_S16_AS"/>
</dbReference>
<dbReference type="InterPro" id="IPR015947">
    <property type="entry name" value="PUA-like_sf"/>
</dbReference>
<dbReference type="InterPro" id="IPR020568">
    <property type="entry name" value="Ribosomal_Su5_D2-typ_SF"/>
</dbReference>
<dbReference type="InterPro" id="IPR014721">
    <property type="entry name" value="Ribsml_uS5_D2-typ_fold_subgr"/>
</dbReference>
<dbReference type="NCBIfam" id="TIGR00763">
    <property type="entry name" value="lon"/>
    <property type="match status" value="1"/>
</dbReference>
<dbReference type="PANTHER" id="PTHR10046">
    <property type="entry name" value="ATP DEPENDENT LON PROTEASE FAMILY MEMBER"/>
    <property type="match status" value="1"/>
</dbReference>
<dbReference type="Pfam" id="PF00004">
    <property type="entry name" value="AAA"/>
    <property type="match status" value="1"/>
</dbReference>
<dbReference type="Pfam" id="PF05362">
    <property type="entry name" value="Lon_C"/>
    <property type="match status" value="1"/>
</dbReference>
<dbReference type="Pfam" id="PF22667">
    <property type="entry name" value="Lon_lid"/>
    <property type="match status" value="1"/>
</dbReference>
<dbReference type="Pfam" id="PF02190">
    <property type="entry name" value="LON_substr_bdg"/>
    <property type="match status" value="1"/>
</dbReference>
<dbReference type="PIRSF" id="PIRSF001174">
    <property type="entry name" value="Lon_proteas"/>
    <property type="match status" value="1"/>
</dbReference>
<dbReference type="PRINTS" id="PR00830">
    <property type="entry name" value="ENDOLAPTASE"/>
</dbReference>
<dbReference type="SMART" id="SM00382">
    <property type="entry name" value="AAA"/>
    <property type="match status" value="1"/>
</dbReference>
<dbReference type="SMART" id="SM00464">
    <property type="entry name" value="LON"/>
    <property type="match status" value="1"/>
</dbReference>
<dbReference type="SUPFAM" id="SSF52540">
    <property type="entry name" value="P-loop containing nucleoside triphosphate hydrolases"/>
    <property type="match status" value="1"/>
</dbReference>
<dbReference type="SUPFAM" id="SSF88697">
    <property type="entry name" value="PUA domain-like"/>
    <property type="match status" value="1"/>
</dbReference>
<dbReference type="SUPFAM" id="SSF54211">
    <property type="entry name" value="Ribosomal protein S5 domain 2-like"/>
    <property type="match status" value="1"/>
</dbReference>
<dbReference type="PROSITE" id="PS51787">
    <property type="entry name" value="LON_N"/>
    <property type="match status" value="1"/>
</dbReference>
<dbReference type="PROSITE" id="PS51786">
    <property type="entry name" value="LON_PROTEOLYTIC"/>
    <property type="match status" value="1"/>
</dbReference>
<dbReference type="PROSITE" id="PS01046">
    <property type="entry name" value="LON_SER"/>
    <property type="match status" value="1"/>
</dbReference>
<evidence type="ECO:0000255" key="1">
    <source>
        <dbReference type="HAMAP-Rule" id="MF_01973"/>
    </source>
</evidence>
<evidence type="ECO:0000255" key="2">
    <source>
        <dbReference type="PROSITE-ProRule" id="PRU01122"/>
    </source>
</evidence>
<evidence type="ECO:0000255" key="3">
    <source>
        <dbReference type="PROSITE-ProRule" id="PRU01123"/>
    </source>
</evidence>
<organism>
    <name type="scientific">Flavobacterium johnsoniae (strain ATCC 17061 / DSM 2064 / JCM 8514 / BCRC 14874 / CCUG 350202 / NBRC 14942 / NCIMB 11054 / UW101)</name>
    <name type="common">Cytophaga johnsonae</name>
    <dbReference type="NCBI Taxonomy" id="376686"/>
    <lineage>
        <taxon>Bacteria</taxon>
        <taxon>Pseudomonadati</taxon>
        <taxon>Bacteroidota</taxon>
        <taxon>Flavobacteriia</taxon>
        <taxon>Flavobacteriales</taxon>
        <taxon>Flavobacteriaceae</taxon>
        <taxon>Flavobacterium</taxon>
    </lineage>
</organism>
<proteinExistence type="inferred from homology"/>
<comment type="function">
    <text evidence="1">ATP-dependent serine protease that mediates the selective degradation of mutant and abnormal proteins as well as certain short-lived regulatory proteins. Required for cellular homeostasis and for survival from DNA damage and developmental changes induced by stress. Degrades polypeptides processively to yield small peptide fragments that are 5 to 10 amino acids long. Binds to DNA in a double-stranded, site-specific manner.</text>
</comment>
<comment type="catalytic activity">
    <reaction evidence="1">
        <text>Hydrolysis of proteins in presence of ATP.</text>
        <dbReference type="EC" id="3.4.21.53"/>
    </reaction>
</comment>
<comment type="subunit">
    <text evidence="1">Homohexamer. Organized in a ring with a central cavity.</text>
</comment>
<comment type="subcellular location">
    <subcellularLocation>
        <location evidence="1">Cytoplasm</location>
    </subcellularLocation>
</comment>
<comment type="induction">
    <text evidence="1">By heat shock.</text>
</comment>
<comment type="similarity">
    <text evidence="1">Belongs to the peptidase S16 family.</text>
</comment>
<name>LON_FLAJ1</name>